<sequence length="119" mass="13002">MDRVALRGLKARGHHGVFPKEREDGQTFLVDIVLGLDTRPAAADDDLAKTVHYGIVAEEVVAVVEGEPVNLVETLAERIAQVCLKHEGVEEVEVCVHKPDAPITVPFDDVTVTIIRSRV</sequence>
<name>FOLB_STRCO</name>
<keyword id="KW-0289">Folate biosynthesis</keyword>
<keyword id="KW-0456">Lyase</keyword>
<keyword id="KW-1185">Reference proteome</keyword>
<feature type="chain" id="PRO_0000168287" description="Dihydroneopterin aldolase">
    <location>
        <begin position="1"/>
        <end position="119"/>
    </location>
</feature>
<feature type="active site" description="Proton donor/acceptor" evidence="1">
    <location>
        <position position="98"/>
    </location>
</feature>
<feature type="binding site" evidence="1">
    <location>
        <position position="21"/>
    </location>
    <ligand>
        <name>substrate</name>
    </ligand>
</feature>
<feature type="binding site" evidence="1">
    <location>
        <position position="53"/>
    </location>
    <ligand>
        <name>substrate</name>
    </ligand>
</feature>
<feature type="binding site" evidence="1">
    <location>
        <begin position="72"/>
        <end position="73"/>
    </location>
    <ligand>
        <name>substrate</name>
    </ligand>
</feature>
<reference key="1">
    <citation type="journal article" date="2002" name="Nature">
        <title>Complete genome sequence of the model actinomycete Streptomyces coelicolor A3(2).</title>
        <authorList>
            <person name="Bentley S.D."/>
            <person name="Chater K.F."/>
            <person name="Cerdeno-Tarraga A.-M."/>
            <person name="Challis G.L."/>
            <person name="Thomson N.R."/>
            <person name="James K.D."/>
            <person name="Harris D.E."/>
            <person name="Quail M.A."/>
            <person name="Kieser H."/>
            <person name="Harper D."/>
            <person name="Bateman A."/>
            <person name="Brown S."/>
            <person name="Chandra G."/>
            <person name="Chen C.W."/>
            <person name="Collins M."/>
            <person name="Cronin A."/>
            <person name="Fraser A."/>
            <person name="Goble A."/>
            <person name="Hidalgo J."/>
            <person name="Hornsby T."/>
            <person name="Howarth S."/>
            <person name="Huang C.-H."/>
            <person name="Kieser T."/>
            <person name="Larke L."/>
            <person name="Murphy L.D."/>
            <person name="Oliver K."/>
            <person name="O'Neil S."/>
            <person name="Rabbinowitsch E."/>
            <person name="Rajandream M.A."/>
            <person name="Rutherford K.M."/>
            <person name="Rutter S."/>
            <person name="Seeger K."/>
            <person name="Saunders D."/>
            <person name="Sharp S."/>
            <person name="Squares R."/>
            <person name="Squares S."/>
            <person name="Taylor K."/>
            <person name="Warren T."/>
            <person name="Wietzorrek A."/>
            <person name="Woodward J.R."/>
            <person name="Barrell B.G."/>
            <person name="Parkhill J."/>
            <person name="Hopwood D.A."/>
        </authorList>
    </citation>
    <scope>NUCLEOTIDE SEQUENCE [LARGE SCALE GENOMIC DNA]</scope>
    <source>
        <strain>ATCC BAA-471 / A3(2) / M145</strain>
    </source>
</reference>
<protein>
    <recommendedName>
        <fullName>Dihydroneopterin aldolase</fullName>
        <shortName>DHNA</shortName>
        <ecNumber>4.1.2.25</ecNumber>
    </recommendedName>
    <alternativeName>
        <fullName>7,8-dihydroneopterin aldolase</fullName>
    </alternativeName>
</protein>
<comment type="function">
    <text evidence="1">Catalyzes the conversion of 7,8-dihydroneopterin to 6-hydroxymethyl-7,8-dihydropterin.</text>
</comment>
<comment type="catalytic activity">
    <reaction evidence="1">
        <text>7,8-dihydroneopterin = 6-hydroxymethyl-7,8-dihydropterin + glycolaldehyde</text>
        <dbReference type="Rhea" id="RHEA:10540"/>
        <dbReference type="ChEBI" id="CHEBI:17001"/>
        <dbReference type="ChEBI" id="CHEBI:17071"/>
        <dbReference type="ChEBI" id="CHEBI:44841"/>
        <dbReference type="EC" id="4.1.2.25"/>
    </reaction>
</comment>
<comment type="pathway">
    <text>Cofactor biosynthesis; tetrahydrofolate biosynthesis; 2-amino-4-hydroxy-6-hydroxymethyl-7,8-dihydropteridine diphosphate from 7,8-dihydroneopterin triphosphate: step 3/4.</text>
</comment>
<comment type="similarity">
    <text evidence="2">Belongs to the DHNA family.</text>
</comment>
<dbReference type="EC" id="4.1.2.25"/>
<dbReference type="EMBL" id="AL939116">
    <property type="protein sequence ID" value="CAB42753.1"/>
    <property type="molecule type" value="Genomic_DNA"/>
</dbReference>
<dbReference type="PIR" id="T36326">
    <property type="entry name" value="T36326"/>
</dbReference>
<dbReference type="RefSeq" id="NP_627606.1">
    <property type="nucleotide sequence ID" value="NC_003888.3"/>
</dbReference>
<dbReference type="RefSeq" id="WP_011028954.1">
    <property type="nucleotide sequence ID" value="NZ_VNID01000023.1"/>
</dbReference>
<dbReference type="SMR" id="Q9X8I0"/>
<dbReference type="FunCoup" id="Q9X8I0">
    <property type="interactions" value="146"/>
</dbReference>
<dbReference type="STRING" id="100226.gene:17761022"/>
<dbReference type="PaxDb" id="100226-SCO3400"/>
<dbReference type="GeneID" id="96649777"/>
<dbReference type="KEGG" id="sco:SCO3400"/>
<dbReference type="PATRIC" id="fig|100226.15.peg.3463"/>
<dbReference type="eggNOG" id="COG1539">
    <property type="taxonomic scope" value="Bacteria"/>
</dbReference>
<dbReference type="HOGENOM" id="CLU_112632_1_1_11"/>
<dbReference type="InParanoid" id="Q9X8I0"/>
<dbReference type="OrthoDB" id="3212934at2"/>
<dbReference type="PhylomeDB" id="Q9X8I0"/>
<dbReference type="UniPathway" id="UPA00077">
    <property type="reaction ID" value="UER00154"/>
</dbReference>
<dbReference type="Proteomes" id="UP000001973">
    <property type="component" value="Chromosome"/>
</dbReference>
<dbReference type="GO" id="GO:0005737">
    <property type="term" value="C:cytoplasm"/>
    <property type="evidence" value="ECO:0000318"/>
    <property type="project" value="GO_Central"/>
</dbReference>
<dbReference type="GO" id="GO:0004150">
    <property type="term" value="F:dihydroneopterin aldolase activity"/>
    <property type="evidence" value="ECO:0000318"/>
    <property type="project" value="GO_Central"/>
</dbReference>
<dbReference type="GO" id="GO:0046656">
    <property type="term" value="P:folic acid biosynthetic process"/>
    <property type="evidence" value="ECO:0007669"/>
    <property type="project" value="UniProtKB-KW"/>
</dbReference>
<dbReference type="GO" id="GO:0046654">
    <property type="term" value="P:tetrahydrofolate biosynthetic process"/>
    <property type="evidence" value="ECO:0007669"/>
    <property type="project" value="UniProtKB-UniPathway"/>
</dbReference>
<dbReference type="FunFam" id="3.30.1130.10:FF:000003">
    <property type="entry name" value="7,8-dihydroneopterin aldolase"/>
    <property type="match status" value="1"/>
</dbReference>
<dbReference type="Gene3D" id="3.30.1130.10">
    <property type="match status" value="1"/>
</dbReference>
<dbReference type="InterPro" id="IPR006156">
    <property type="entry name" value="Dihydroneopterin_aldolase"/>
</dbReference>
<dbReference type="InterPro" id="IPR006157">
    <property type="entry name" value="FolB_dom"/>
</dbReference>
<dbReference type="InterPro" id="IPR043133">
    <property type="entry name" value="GTP-CH-I_C/QueF"/>
</dbReference>
<dbReference type="NCBIfam" id="TIGR00525">
    <property type="entry name" value="folB"/>
    <property type="match status" value="1"/>
</dbReference>
<dbReference type="NCBIfam" id="TIGR00526">
    <property type="entry name" value="folB_dom"/>
    <property type="match status" value="1"/>
</dbReference>
<dbReference type="PANTHER" id="PTHR42844">
    <property type="entry name" value="DIHYDRONEOPTERIN ALDOLASE 1-RELATED"/>
    <property type="match status" value="1"/>
</dbReference>
<dbReference type="PANTHER" id="PTHR42844:SF1">
    <property type="entry name" value="DIHYDRONEOPTERIN ALDOLASE 1-RELATED"/>
    <property type="match status" value="1"/>
</dbReference>
<dbReference type="Pfam" id="PF02152">
    <property type="entry name" value="FolB"/>
    <property type="match status" value="1"/>
</dbReference>
<dbReference type="SMART" id="SM00905">
    <property type="entry name" value="FolB"/>
    <property type="match status" value="1"/>
</dbReference>
<dbReference type="SUPFAM" id="SSF55620">
    <property type="entry name" value="Tetrahydrobiopterin biosynthesis enzymes-like"/>
    <property type="match status" value="1"/>
</dbReference>
<organism>
    <name type="scientific">Streptomyces coelicolor (strain ATCC BAA-471 / A3(2) / M145)</name>
    <dbReference type="NCBI Taxonomy" id="100226"/>
    <lineage>
        <taxon>Bacteria</taxon>
        <taxon>Bacillati</taxon>
        <taxon>Actinomycetota</taxon>
        <taxon>Actinomycetes</taxon>
        <taxon>Kitasatosporales</taxon>
        <taxon>Streptomycetaceae</taxon>
        <taxon>Streptomyces</taxon>
        <taxon>Streptomyces albidoflavus group</taxon>
    </lineage>
</organism>
<gene>
    <name type="primary">folB</name>
    <name type="ordered locus">SCO3400</name>
    <name type="ORF">SCE9.07</name>
</gene>
<accession>Q9X8I0</accession>
<proteinExistence type="inferred from homology"/>
<evidence type="ECO:0000250" key="1">
    <source>
        <dbReference type="UniProtKB" id="P0AC16"/>
    </source>
</evidence>
<evidence type="ECO:0000305" key="2"/>